<keyword id="KW-0067">ATP-binding</keyword>
<keyword id="KW-0227">DNA damage</keyword>
<keyword id="KW-0234">DNA repair</keyword>
<keyword id="KW-0238">DNA-binding</keyword>
<keyword id="KW-0269">Exonuclease</keyword>
<keyword id="KW-0347">Helicase</keyword>
<keyword id="KW-0378">Hydrolase</keyword>
<keyword id="KW-0413">Isomerase</keyword>
<keyword id="KW-0540">Nuclease</keyword>
<keyword id="KW-0547">Nucleotide-binding</keyword>
<feature type="chain" id="PRO_1000215324" description="ATP-dependent helicase/nuclease subunit A">
    <location>
        <begin position="1"/>
        <end position="1279"/>
    </location>
</feature>
<feature type="domain" description="UvrD-like helicase ATP-binding" evidence="1">
    <location>
        <begin position="4"/>
        <end position="499"/>
    </location>
</feature>
<feature type="domain" description="UvrD-like helicase C-terminal" evidence="1">
    <location>
        <begin position="526"/>
        <end position="853"/>
    </location>
</feature>
<feature type="binding site" evidence="1">
    <location>
        <begin position="25"/>
        <end position="32"/>
    </location>
    <ligand>
        <name>ATP</name>
        <dbReference type="ChEBI" id="CHEBI:30616"/>
    </ligand>
</feature>
<sequence>MSSTKWTDEQRQAIFTKNCNLLVAAGAGAGKTAVLVQRIIEKILDKEEPIDIDKLLVVTFTNAAAAEMRERIGDAISKGLDEDPESKVLRKQLTLLNKSNIMTIHSFCLQVIKNNFHTIEIDPNFRICDETEGILMKQEAIDELFDELYEIENEDFINLVESYASRKDIRLQGVVLELHRFAKSAPFSYDWLLNMAEEFNVGEEFNFEETPWADMIMEDMKVLLHGFKNMLQKSIDVILNSEGIEYYYEPFKMDLNFINSLLEKLSFKEFRGEIIAYDFPKLPLKRNKDADKEAKERVKKLRDKVKKRIIELRITLNSYENEFTKKEFIFLYPSMKALSNLVILFDKKYEAKKRERDLIDFNDIEHLCLSILTDKDSKGHIIPSDIALDYRKKFAEVLIDEYQDSNLVQEVIMSMVSRVKGYWSFYNGQLMFNEEEINLEEPHIGLDIPNRFMVGDVKQSIYRFRQAKPEIFLDKYNEYSEEEGIKNRKVKLFKNFRSREEVINGVNYLFKQIMSKTIGELDYTEEEALKVGASYGEEVKGEPIELCLMDKKYEISEEVLKEYNVDEEEALDNIQLEGRLVAKKIQKLVGNNLEGGLKVFDKKLGEYRNLQYRDIVILMRATSNWAPVFVEELAKEGIPVFADTNSGYFDTAEIKTMISLLQIIDNPLQDIPLLSVLRSPIASFNDDELIDIRMVNKNIAFYECMEIIYRLYKNEKLDSYYSFYIKDENKINKIIKDMNEKLKNKICSFIEKLKLWREKSINIDIDEFIWFLYMETGYYGYAGALQAGEQRQANLRILFQRAKQYAKTSYKGLFNFINFINKLKFSSGDMGSAKILGENENVIRIMSIHKSKGLEFPVVILSGTGKNFNMTDLNKNILFHRDLGYGPDYVDTERRIAYPSLVKNIIKNKIRLETLSEEMRILYVALTRAREKLIITGLINNMDKAVESWLNLSDDKNKVPEYAVMNGKTYLDWIGPAIIKHKDAVSFREELKMSSELSNIVDDKSKWKIELWNKKELLKEKVEEDEVEISEKIKETLMNLGESNYKEEIYKRLSFKYKYDNASSIPTKLSVSDVKKQFILDEKENTEELFKKVELRKPMFMGEKKKISPSERGTIIHLFMQHLDLKKAENKEDIKEQINRLIEREFITYEQSKVINPYKILKFCRSELGKRMINSNNINREMPFSIEIPAVEIYRELDKNIYKDEKLIIQGIIDCYFEEEEGLVLLDYKTDYVNDIEEIKNRYEIQIKYYEEALNRITGKTVKDKYLYLFSVDNYIKID</sequence>
<protein>
    <recommendedName>
        <fullName evidence="1">ATP-dependent helicase/nuclease subunit A</fullName>
        <ecNumber evidence="1">3.1.-.-</ecNumber>
        <ecNumber evidence="1">5.6.2.4</ecNumber>
    </recommendedName>
    <alternativeName>
        <fullName evidence="1">ATP-dependent helicase/nuclease AddA</fullName>
    </alternativeName>
    <alternativeName>
        <fullName evidence="1">DNA 3'-5' helicase AddA</fullName>
    </alternativeName>
</protein>
<reference key="1">
    <citation type="submission" date="2008-05" db="EMBL/GenBank/DDBJ databases">
        <title>Genome sequence of Clostridium botulinum Ba4 strain 657.</title>
        <authorList>
            <person name="Shrivastava S."/>
            <person name="Brown J.L."/>
            <person name="Bruce D."/>
            <person name="Detter C."/>
            <person name="Munk C."/>
            <person name="Smith L.A."/>
            <person name="Smith T.J."/>
            <person name="Sutton G."/>
            <person name="Brettin T.S."/>
        </authorList>
    </citation>
    <scope>NUCLEOTIDE SEQUENCE [LARGE SCALE GENOMIC DNA]</scope>
    <source>
        <strain>657 / Type Ba4</strain>
    </source>
</reference>
<comment type="function">
    <text evidence="1">The heterodimer acts as both an ATP-dependent DNA helicase and an ATP-dependent, dual-direction single-stranded exonuclease. Recognizes the chi site generating a DNA molecule suitable for the initiation of homologous recombination. The AddA nuclease domain is required for chi fragment generation; this subunit has the helicase and 3' -&gt; 5' nuclease activities.</text>
</comment>
<comment type="catalytic activity">
    <reaction evidence="1">
        <text>Couples ATP hydrolysis with the unwinding of duplex DNA by translocating in the 3'-5' direction.</text>
        <dbReference type="EC" id="5.6.2.4"/>
    </reaction>
</comment>
<comment type="catalytic activity">
    <reaction evidence="1">
        <text>ATP + H2O = ADP + phosphate + H(+)</text>
        <dbReference type="Rhea" id="RHEA:13065"/>
        <dbReference type="ChEBI" id="CHEBI:15377"/>
        <dbReference type="ChEBI" id="CHEBI:15378"/>
        <dbReference type="ChEBI" id="CHEBI:30616"/>
        <dbReference type="ChEBI" id="CHEBI:43474"/>
        <dbReference type="ChEBI" id="CHEBI:456216"/>
        <dbReference type="EC" id="5.6.2.4"/>
    </reaction>
</comment>
<comment type="cofactor">
    <cofactor evidence="1">
        <name>Mg(2+)</name>
        <dbReference type="ChEBI" id="CHEBI:18420"/>
    </cofactor>
</comment>
<comment type="subunit">
    <text evidence="1">Heterodimer of AddA and AddB/RexB.</text>
</comment>
<comment type="similarity">
    <text evidence="1">Belongs to the helicase family. AddA subfamily.</text>
</comment>
<evidence type="ECO:0000255" key="1">
    <source>
        <dbReference type="HAMAP-Rule" id="MF_01451"/>
    </source>
</evidence>
<accession>C3L047</accession>
<organism>
    <name type="scientific">Clostridium botulinum (strain 657 / Type Ba4)</name>
    <dbReference type="NCBI Taxonomy" id="515621"/>
    <lineage>
        <taxon>Bacteria</taxon>
        <taxon>Bacillati</taxon>
        <taxon>Bacillota</taxon>
        <taxon>Clostridia</taxon>
        <taxon>Eubacteriales</taxon>
        <taxon>Clostridiaceae</taxon>
        <taxon>Clostridium</taxon>
    </lineage>
</organism>
<name>ADDA_CLOB6</name>
<proteinExistence type="inferred from homology"/>
<gene>
    <name evidence="1" type="primary">addA</name>
    <name type="ordered locus">CLJ_B0507</name>
</gene>
<dbReference type="EC" id="3.1.-.-" evidence="1"/>
<dbReference type="EC" id="5.6.2.4" evidence="1"/>
<dbReference type="EMBL" id="CP001083">
    <property type="protein sequence ID" value="ACQ53258.1"/>
    <property type="molecule type" value="Genomic_DNA"/>
</dbReference>
<dbReference type="RefSeq" id="WP_003359648.1">
    <property type="nucleotide sequence ID" value="NC_012658.1"/>
</dbReference>
<dbReference type="SMR" id="C3L047"/>
<dbReference type="KEGG" id="cbi:CLJ_B0507"/>
<dbReference type="HOGENOM" id="CLU_001114_3_1_9"/>
<dbReference type="Proteomes" id="UP000002333">
    <property type="component" value="Chromosome"/>
</dbReference>
<dbReference type="GO" id="GO:0005829">
    <property type="term" value="C:cytosol"/>
    <property type="evidence" value="ECO:0007669"/>
    <property type="project" value="TreeGrafter"/>
</dbReference>
<dbReference type="GO" id="GO:0033202">
    <property type="term" value="C:DNA helicase complex"/>
    <property type="evidence" value="ECO:0007669"/>
    <property type="project" value="TreeGrafter"/>
</dbReference>
<dbReference type="GO" id="GO:0043138">
    <property type="term" value="F:3'-5' DNA helicase activity"/>
    <property type="evidence" value="ECO:0007669"/>
    <property type="project" value="UniProtKB-UniRule"/>
</dbReference>
<dbReference type="GO" id="GO:0008408">
    <property type="term" value="F:3'-5' exonuclease activity"/>
    <property type="evidence" value="ECO:0007669"/>
    <property type="project" value="UniProtKB-UniRule"/>
</dbReference>
<dbReference type="GO" id="GO:0005524">
    <property type="term" value="F:ATP binding"/>
    <property type="evidence" value="ECO:0007669"/>
    <property type="project" value="UniProtKB-UniRule"/>
</dbReference>
<dbReference type="GO" id="GO:0016887">
    <property type="term" value="F:ATP hydrolysis activity"/>
    <property type="evidence" value="ECO:0007669"/>
    <property type="project" value="RHEA"/>
</dbReference>
<dbReference type="GO" id="GO:0003690">
    <property type="term" value="F:double-stranded DNA binding"/>
    <property type="evidence" value="ECO:0007669"/>
    <property type="project" value="UniProtKB-UniRule"/>
</dbReference>
<dbReference type="GO" id="GO:0000724">
    <property type="term" value="P:double-strand break repair via homologous recombination"/>
    <property type="evidence" value="ECO:0007669"/>
    <property type="project" value="UniProtKB-UniRule"/>
</dbReference>
<dbReference type="FunFam" id="3.40.50.300:FF:001164">
    <property type="entry name" value="ATP-dependent helicase/nuclease subunit A"/>
    <property type="match status" value="1"/>
</dbReference>
<dbReference type="FunFam" id="3.40.50.300:FF:001196">
    <property type="entry name" value="ATP-dependent helicase/nuclease subunit A"/>
    <property type="match status" value="1"/>
</dbReference>
<dbReference type="FunFam" id="3.40.50.300:FF:001236">
    <property type="entry name" value="ATP-dependent helicase/nuclease subunit A"/>
    <property type="match status" value="1"/>
</dbReference>
<dbReference type="Gene3D" id="3.90.320.10">
    <property type="match status" value="1"/>
</dbReference>
<dbReference type="Gene3D" id="3.40.50.300">
    <property type="entry name" value="P-loop containing nucleotide triphosphate hydrolases"/>
    <property type="match status" value="4"/>
</dbReference>
<dbReference type="HAMAP" id="MF_01451">
    <property type="entry name" value="AddA"/>
    <property type="match status" value="1"/>
</dbReference>
<dbReference type="InterPro" id="IPR014152">
    <property type="entry name" value="AddA"/>
</dbReference>
<dbReference type="InterPro" id="IPR014017">
    <property type="entry name" value="DNA_helicase_UvrD-like_C"/>
</dbReference>
<dbReference type="InterPro" id="IPR000212">
    <property type="entry name" value="DNA_helicase_UvrD/REP"/>
</dbReference>
<dbReference type="InterPro" id="IPR027417">
    <property type="entry name" value="P-loop_NTPase"/>
</dbReference>
<dbReference type="InterPro" id="IPR011604">
    <property type="entry name" value="PDDEXK-like_dom_sf"/>
</dbReference>
<dbReference type="InterPro" id="IPR038726">
    <property type="entry name" value="PDDEXK_AddAB-type"/>
</dbReference>
<dbReference type="InterPro" id="IPR011335">
    <property type="entry name" value="Restrct_endonuc-II-like"/>
</dbReference>
<dbReference type="InterPro" id="IPR014016">
    <property type="entry name" value="UvrD-like_ATP-bd"/>
</dbReference>
<dbReference type="NCBIfam" id="TIGR02785">
    <property type="entry name" value="addA_Gpos"/>
    <property type="match status" value="1"/>
</dbReference>
<dbReference type="PANTHER" id="PTHR11070:SF48">
    <property type="entry name" value="ATP-DEPENDENT HELICASE_NUCLEASE SUBUNIT A"/>
    <property type="match status" value="1"/>
</dbReference>
<dbReference type="PANTHER" id="PTHR11070">
    <property type="entry name" value="UVRD / RECB / PCRA DNA HELICASE FAMILY MEMBER"/>
    <property type="match status" value="1"/>
</dbReference>
<dbReference type="Pfam" id="PF12705">
    <property type="entry name" value="PDDEXK_1"/>
    <property type="match status" value="1"/>
</dbReference>
<dbReference type="Pfam" id="PF00580">
    <property type="entry name" value="UvrD-helicase"/>
    <property type="match status" value="1"/>
</dbReference>
<dbReference type="Pfam" id="PF13361">
    <property type="entry name" value="UvrD_C"/>
    <property type="match status" value="1"/>
</dbReference>
<dbReference type="SUPFAM" id="SSF52540">
    <property type="entry name" value="P-loop containing nucleoside triphosphate hydrolases"/>
    <property type="match status" value="1"/>
</dbReference>
<dbReference type="SUPFAM" id="SSF52980">
    <property type="entry name" value="Restriction endonuclease-like"/>
    <property type="match status" value="1"/>
</dbReference>
<dbReference type="PROSITE" id="PS51198">
    <property type="entry name" value="UVRD_HELICASE_ATP_BIND"/>
    <property type="match status" value="1"/>
</dbReference>
<dbReference type="PROSITE" id="PS51217">
    <property type="entry name" value="UVRD_HELICASE_CTER"/>
    <property type="match status" value="1"/>
</dbReference>